<name>Y3401_YERPS</name>
<accession>Q665V9</accession>
<feature type="chain" id="PRO_5000099023" description="UPF0441 protein YPTB3401">
    <location>
        <begin position="1"/>
        <end position="227"/>
    </location>
</feature>
<feature type="region of interest" description="Disordered" evidence="2">
    <location>
        <begin position="198"/>
        <end position="227"/>
    </location>
</feature>
<feature type="compositionally biased region" description="Low complexity" evidence="2">
    <location>
        <begin position="212"/>
        <end position="227"/>
    </location>
</feature>
<proteinExistence type="inferred from homology"/>
<protein>
    <recommendedName>
        <fullName evidence="1">UPF0441 protein YPTB3401</fullName>
    </recommendedName>
</protein>
<gene>
    <name type="ordered locus">YPTB3401</name>
</gene>
<reference key="1">
    <citation type="journal article" date="2004" name="Proc. Natl. Acad. Sci. U.S.A.">
        <title>Insights into the evolution of Yersinia pestis through whole-genome comparison with Yersinia pseudotuberculosis.</title>
        <authorList>
            <person name="Chain P.S.G."/>
            <person name="Carniel E."/>
            <person name="Larimer F.W."/>
            <person name="Lamerdin J."/>
            <person name="Stoutland P.O."/>
            <person name="Regala W.M."/>
            <person name="Georgescu A.M."/>
            <person name="Vergez L.M."/>
            <person name="Land M.L."/>
            <person name="Motin V.L."/>
            <person name="Brubaker R.R."/>
            <person name="Fowler J."/>
            <person name="Hinnebusch J."/>
            <person name="Marceau M."/>
            <person name="Medigue C."/>
            <person name="Simonet M."/>
            <person name="Chenal-Francisque V."/>
            <person name="Souza B."/>
            <person name="Dacheux D."/>
            <person name="Elliott J.M."/>
            <person name="Derbise A."/>
            <person name="Hauser L.J."/>
            <person name="Garcia E."/>
        </authorList>
    </citation>
    <scope>NUCLEOTIDE SEQUENCE [LARGE SCALE GENOMIC DNA]</scope>
    <source>
        <strain>IP32953</strain>
    </source>
</reference>
<organism>
    <name type="scientific">Yersinia pseudotuberculosis serotype I (strain IP32953)</name>
    <dbReference type="NCBI Taxonomy" id="273123"/>
    <lineage>
        <taxon>Bacteria</taxon>
        <taxon>Pseudomonadati</taxon>
        <taxon>Pseudomonadota</taxon>
        <taxon>Gammaproteobacteria</taxon>
        <taxon>Enterobacterales</taxon>
        <taxon>Yersiniaceae</taxon>
        <taxon>Yersinia</taxon>
    </lineage>
</organism>
<evidence type="ECO:0000255" key="1">
    <source>
        <dbReference type="HAMAP-Rule" id="MF_01188"/>
    </source>
</evidence>
<evidence type="ECO:0000256" key="2">
    <source>
        <dbReference type="SAM" id="MobiDB-lite"/>
    </source>
</evidence>
<evidence type="ECO:0000305" key="3"/>
<sequence length="227" mass="23835">MKRTKNINQETFRKSWRSYRLAPVALAVSAVFMLAGCEKTDETVSLYQNADDCSQANPSQSAECTTAYNTALQEAVKTAPKYATREDCVAEFGESQCTQAPAQAGMVPTSSSETTAAAPQQSGSMWMPLMAGYMMGRMMGGGASQPLFTSKAPNSPANGKFVDASGKNFGAATTGRTMTVPKTALAPKPAVTKTITRGGFGESVAKQSSMQRSAATSSKTTTRSMGG</sequence>
<comment type="similarity">
    <text evidence="1">Belongs to the UPF0441 family.</text>
</comment>
<comment type="sequence caution" evidence="3">
    <conflict type="erroneous initiation">
        <sequence resource="EMBL-CDS" id="CAH22639"/>
    </conflict>
</comment>
<dbReference type="EMBL" id="BX936398">
    <property type="protein sequence ID" value="CAH22639.1"/>
    <property type="status" value="ALT_INIT"/>
    <property type="molecule type" value="Genomic_DNA"/>
</dbReference>
<dbReference type="RefSeq" id="WP_002357252.1">
    <property type="nucleotide sequence ID" value="NZ_CP009712.1"/>
</dbReference>
<dbReference type="SMR" id="Q665V9"/>
<dbReference type="KEGG" id="ypo:BZ17_3207"/>
<dbReference type="KEGG" id="yps:YPTB3401"/>
<dbReference type="PATRIC" id="fig|273123.14.peg.3359"/>
<dbReference type="Proteomes" id="UP000001011">
    <property type="component" value="Chromosome"/>
</dbReference>
<dbReference type="HAMAP" id="MF_01188">
    <property type="entry name" value="UPF0441"/>
    <property type="match status" value="1"/>
</dbReference>
<dbReference type="InterPro" id="IPR009576">
    <property type="entry name" value="Biofilm_formation_YgiB"/>
</dbReference>
<dbReference type="NCBIfam" id="NF008655">
    <property type="entry name" value="PRK11653.1"/>
    <property type="match status" value="1"/>
</dbReference>
<dbReference type="Pfam" id="PF06693">
    <property type="entry name" value="DUF1190"/>
    <property type="match status" value="1"/>
</dbReference>